<gene>
    <name type="primary">act</name>
    <name type="ORF">B7A16.050</name>
    <name type="ORF">NCU04173</name>
</gene>
<keyword id="KW-0067">ATP-binding</keyword>
<keyword id="KW-0963">Cytoplasm</keyword>
<keyword id="KW-0206">Cytoskeleton</keyword>
<keyword id="KW-0378">Hydrolase</keyword>
<keyword id="KW-0547">Nucleotide-binding</keyword>
<keyword id="KW-1185">Reference proteome</keyword>
<feature type="chain" id="PRO_0000088968" description="Actin">
    <location>
        <begin position="1"/>
        <end position="375"/>
    </location>
</feature>
<feature type="sequence conflict" description="In Ref. 1; AAC78496." evidence="2" ref="1">
    <original>H</original>
    <variation>Y</variation>
    <location>
        <position position="40"/>
    </location>
</feature>
<feature type="sequence conflict" description="In Ref. 1; AAC78496." evidence="2" ref="1">
    <original>A</original>
    <variation>S</variation>
    <location>
        <position position="176"/>
    </location>
</feature>
<feature type="sequence conflict" description="In Ref. 1; AAC78496." evidence="2" ref="1">
    <original>E</original>
    <variation>K</variation>
    <location>
        <position position="259"/>
    </location>
</feature>
<organism>
    <name type="scientific">Neurospora crassa (strain ATCC 24698 / 74-OR23-1A / CBS 708.71 / DSM 1257 / FGSC 987)</name>
    <dbReference type="NCBI Taxonomy" id="367110"/>
    <lineage>
        <taxon>Eukaryota</taxon>
        <taxon>Fungi</taxon>
        <taxon>Dikarya</taxon>
        <taxon>Ascomycota</taxon>
        <taxon>Pezizomycotina</taxon>
        <taxon>Sordariomycetes</taxon>
        <taxon>Sordariomycetidae</taxon>
        <taxon>Sordariales</taxon>
        <taxon>Sordariaceae</taxon>
        <taxon>Neurospora</taxon>
    </lineage>
</organism>
<sequence>MEEEVAALVIDNGSGMCKAGFAGDDAPRAVFPSIVGRPRHHGIMIGMGQKDSYVGDEAQSKRGILTLRYPIEHGVVTNWDDMEKIWHHTFYNELRVAPEEHPVLLTEAPINPKSNREKMTQIVFETFNAPAFYVSIQAVLSLYASGRTTGIVLDSGDGVTHVVPIYEGFALPHAIARVDMAGRDLTDYLMKILAERGYTFSTTAEREIVRDIKEKLCYVALDFEQEIQTAAQSSSLEKSYELPDGQVITIGNERFRAPEALFQPSVLGLESGGIHVTTFNSIMKCDVDVRKDLYGNIVMSGGTTMYPGLSDRMQKEITALAPSSMKVKIIAPPERKYSVWIGGSILASLSTFQQMWISKQEYDESGPSIVHRKCF</sequence>
<proteinExistence type="inferred from homology"/>
<reference key="1">
    <citation type="journal article" date="1998" name="Mol. Gen. Genet.">
        <title>Analysis of actin and actin-related protein 3 (ARP3) gene expression following induction of hyphal tip formation and apolar growth in Neurospora.</title>
        <authorList>
            <person name="Tinsley J.H."/>
            <person name="Lee I.H."/>
            <person name="Minke P.F."/>
            <person name="Plamann M."/>
        </authorList>
    </citation>
    <scope>NUCLEOTIDE SEQUENCE [GENOMIC DNA]</scope>
</reference>
<reference key="2">
    <citation type="journal article" date="2003" name="Nucleic Acids Res.">
        <title>What's in the genome of a filamentous fungus? Analysis of the Neurospora genome sequence.</title>
        <authorList>
            <person name="Mannhaupt G."/>
            <person name="Montrone C."/>
            <person name="Haase D."/>
            <person name="Mewes H.-W."/>
            <person name="Aign V."/>
            <person name="Hoheisel J.D."/>
            <person name="Fartmann B."/>
            <person name="Nyakatura G."/>
            <person name="Kempken F."/>
            <person name="Maier J."/>
            <person name="Schulte U."/>
        </authorList>
    </citation>
    <scope>NUCLEOTIDE SEQUENCE [LARGE SCALE GENOMIC DNA]</scope>
    <source>
        <strain>ATCC 24698 / 74-OR23-1A / CBS 708.71 / DSM 1257 / FGSC 987</strain>
    </source>
</reference>
<reference key="3">
    <citation type="journal article" date="2003" name="Nature">
        <title>The genome sequence of the filamentous fungus Neurospora crassa.</title>
        <authorList>
            <person name="Galagan J.E."/>
            <person name="Calvo S.E."/>
            <person name="Borkovich K.A."/>
            <person name="Selker E.U."/>
            <person name="Read N.D."/>
            <person name="Jaffe D.B."/>
            <person name="FitzHugh W."/>
            <person name="Ma L.-J."/>
            <person name="Smirnov S."/>
            <person name="Purcell S."/>
            <person name="Rehman B."/>
            <person name="Elkins T."/>
            <person name="Engels R."/>
            <person name="Wang S."/>
            <person name="Nielsen C.B."/>
            <person name="Butler J."/>
            <person name="Endrizzi M."/>
            <person name="Qui D."/>
            <person name="Ianakiev P."/>
            <person name="Bell-Pedersen D."/>
            <person name="Nelson M.A."/>
            <person name="Werner-Washburne M."/>
            <person name="Selitrennikoff C.P."/>
            <person name="Kinsey J.A."/>
            <person name="Braun E.L."/>
            <person name="Zelter A."/>
            <person name="Schulte U."/>
            <person name="Kothe G.O."/>
            <person name="Jedd G."/>
            <person name="Mewes H.-W."/>
            <person name="Staben C."/>
            <person name="Marcotte E."/>
            <person name="Greenberg D."/>
            <person name="Roy A."/>
            <person name="Foley K."/>
            <person name="Naylor J."/>
            <person name="Stange-Thomann N."/>
            <person name="Barrett R."/>
            <person name="Gnerre S."/>
            <person name="Kamal M."/>
            <person name="Kamvysselis M."/>
            <person name="Mauceli E.W."/>
            <person name="Bielke C."/>
            <person name="Rudd S."/>
            <person name="Frishman D."/>
            <person name="Krystofova S."/>
            <person name="Rasmussen C."/>
            <person name="Metzenberg R.L."/>
            <person name="Perkins D.D."/>
            <person name="Kroken S."/>
            <person name="Cogoni C."/>
            <person name="Macino G."/>
            <person name="Catcheside D.E.A."/>
            <person name="Li W."/>
            <person name="Pratt R.J."/>
            <person name="Osmani S.A."/>
            <person name="DeSouza C.P.C."/>
            <person name="Glass N.L."/>
            <person name="Orbach M.J."/>
            <person name="Berglund J.A."/>
            <person name="Voelker R."/>
            <person name="Yarden O."/>
            <person name="Plamann M."/>
            <person name="Seiler S."/>
            <person name="Dunlap J.C."/>
            <person name="Radford A."/>
            <person name="Aramayo R."/>
            <person name="Natvig D.O."/>
            <person name="Alex L.A."/>
            <person name="Mannhaupt G."/>
            <person name="Ebbole D.J."/>
            <person name="Freitag M."/>
            <person name="Paulsen I."/>
            <person name="Sachs M.S."/>
            <person name="Lander E.S."/>
            <person name="Nusbaum C."/>
            <person name="Birren B.W."/>
        </authorList>
    </citation>
    <scope>NUCLEOTIDE SEQUENCE [LARGE SCALE GENOMIC DNA]</scope>
    <source>
        <strain>ATCC 24698 / 74-OR23-1A / CBS 708.71 / DSM 1257 / FGSC 987</strain>
    </source>
</reference>
<name>ACT_NEUCR</name>
<dbReference type="EC" id="3.6.4.-" evidence="1"/>
<dbReference type="EMBL" id="U78026">
    <property type="protein sequence ID" value="AAC78496.1"/>
    <property type="molecule type" value="Genomic_DNA"/>
</dbReference>
<dbReference type="EMBL" id="AL513445">
    <property type="protein sequence ID" value="CAC28718.1"/>
    <property type="molecule type" value="Genomic_DNA"/>
</dbReference>
<dbReference type="EMBL" id="CM002240">
    <property type="protein sequence ID" value="ESA42660.1"/>
    <property type="molecule type" value="Genomic_DNA"/>
</dbReference>
<dbReference type="EMBL" id="CM002240">
    <property type="protein sequence ID" value="ESA42661.1"/>
    <property type="molecule type" value="Genomic_DNA"/>
</dbReference>
<dbReference type="RefSeq" id="XP_011394625.1">
    <property type="nucleotide sequence ID" value="XM_011396323.1"/>
</dbReference>
<dbReference type="RefSeq" id="XP_011394626.1">
    <property type="nucleotide sequence ID" value="XM_011396324.1"/>
</dbReference>
<dbReference type="SMR" id="P78711"/>
<dbReference type="FunCoup" id="P78711">
    <property type="interactions" value="1190"/>
</dbReference>
<dbReference type="STRING" id="367110.P78711"/>
<dbReference type="PaxDb" id="5141-EFNCRP00000003898"/>
<dbReference type="EnsemblFungi" id="ESA42660">
    <property type="protein sequence ID" value="ESA42660"/>
    <property type="gene ID" value="NCU04173"/>
</dbReference>
<dbReference type="EnsemblFungi" id="ESA42661">
    <property type="protein sequence ID" value="ESA42661"/>
    <property type="gene ID" value="NCU04173"/>
</dbReference>
<dbReference type="GeneID" id="3877297"/>
<dbReference type="KEGG" id="ncr:NCU04173"/>
<dbReference type="VEuPathDB" id="FungiDB:NCU04173"/>
<dbReference type="HOGENOM" id="CLU_027965_0_2_1"/>
<dbReference type="InParanoid" id="P78711"/>
<dbReference type="OMA" id="FHTTAER"/>
<dbReference type="OrthoDB" id="5132116at2759"/>
<dbReference type="Proteomes" id="UP000001805">
    <property type="component" value="Chromosome 2, Linkage Group V"/>
</dbReference>
<dbReference type="GO" id="GO:0015629">
    <property type="term" value="C:actin cytoskeleton"/>
    <property type="evidence" value="ECO:0000318"/>
    <property type="project" value="GO_Central"/>
</dbReference>
<dbReference type="GO" id="GO:0005737">
    <property type="term" value="C:cytoplasm"/>
    <property type="evidence" value="ECO:0007669"/>
    <property type="project" value="UniProtKB-KW"/>
</dbReference>
<dbReference type="GO" id="GO:0005524">
    <property type="term" value="F:ATP binding"/>
    <property type="evidence" value="ECO:0007669"/>
    <property type="project" value="UniProtKB-KW"/>
</dbReference>
<dbReference type="GO" id="GO:0016787">
    <property type="term" value="F:hydrolase activity"/>
    <property type="evidence" value="ECO:0007669"/>
    <property type="project" value="UniProtKB-KW"/>
</dbReference>
<dbReference type="CDD" id="cd10224">
    <property type="entry name" value="ASKHA_NBD_actin"/>
    <property type="match status" value="1"/>
</dbReference>
<dbReference type="FunFam" id="2.30.36.70:FF:000001">
    <property type="entry name" value="Actin, alpha skeletal muscle"/>
    <property type="match status" value="1"/>
</dbReference>
<dbReference type="FunFam" id="3.30.420.40:FF:000291">
    <property type="entry name" value="Actin, alpha skeletal muscle"/>
    <property type="match status" value="1"/>
</dbReference>
<dbReference type="FunFam" id="3.90.640.10:FF:000001">
    <property type="entry name" value="Actin, muscle"/>
    <property type="match status" value="1"/>
</dbReference>
<dbReference type="FunFam" id="3.30.420.40:FF:000404">
    <property type="entry name" value="Major actin"/>
    <property type="match status" value="1"/>
</dbReference>
<dbReference type="FunFam" id="3.30.420.40:FF:000058">
    <property type="entry name" value="Putative actin-related protein 5"/>
    <property type="match status" value="1"/>
</dbReference>
<dbReference type="Gene3D" id="3.30.420.40">
    <property type="match status" value="2"/>
</dbReference>
<dbReference type="Gene3D" id="3.90.640.10">
    <property type="entry name" value="Actin, Chain A, domain 4"/>
    <property type="match status" value="1"/>
</dbReference>
<dbReference type="InterPro" id="IPR004000">
    <property type="entry name" value="Actin"/>
</dbReference>
<dbReference type="InterPro" id="IPR020902">
    <property type="entry name" value="Actin/actin-like_CS"/>
</dbReference>
<dbReference type="InterPro" id="IPR004001">
    <property type="entry name" value="Actin_CS"/>
</dbReference>
<dbReference type="InterPro" id="IPR043129">
    <property type="entry name" value="ATPase_NBD"/>
</dbReference>
<dbReference type="PANTHER" id="PTHR11937">
    <property type="entry name" value="ACTIN"/>
    <property type="match status" value="1"/>
</dbReference>
<dbReference type="Pfam" id="PF00022">
    <property type="entry name" value="Actin"/>
    <property type="match status" value="1"/>
</dbReference>
<dbReference type="PRINTS" id="PR00190">
    <property type="entry name" value="ACTIN"/>
</dbReference>
<dbReference type="SMART" id="SM00268">
    <property type="entry name" value="ACTIN"/>
    <property type="match status" value="1"/>
</dbReference>
<dbReference type="SUPFAM" id="SSF53067">
    <property type="entry name" value="Actin-like ATPase domain"/>
    <property type="match status" value="2"/>
</dbReference>
<dbReference type="PROSITE" id="PS00406">
    <property type="entry name" value="ACTINS_1"/>
    <property type="match status" value="1"/>
</dbReference>
<dbReference type="PROSITE" id="PS00432">
    <property type="entry name" value="ACTINS_2"/>
    <property type="match status" value="1"/>
</dbReference>
<dbReference type="PROSITE" id="PS01132">
    <property type="entry name" value="ACTINS_ACT_LIKE"/>
    <property type="match status" value="1"/>
</dbReference>
<protein>
    <recommendedName>
        <fullName>Actin</fullName>
        <ecNumber evidence="1">3.6.4.-</ecNumber>
    </recommendedName>
</protein>
<evidence type="ECO:0000250" key="1">
    <source>
        <dbReference type="UniProtKB" id="P60010"/>
    </source>
</evidence>
<evidence type="ECO:0000305" key="2"/>
<comment type="function">
    <text>Actins are highly conserved proteins that are involved in various types of cell motility and are ubiquitously expressed in all eukaryotic cells.</text>
</comment>
<comment type="catalytic activity">
    <reaction evidence="1">
        <text>ATP + H2O = ADP + phosphate + H(+)</text>
        <dbReference type="Rhea" id="RHEA:13065"/>
        <dbReference type="ChEBI" id="CHEBI:15377"/>
        <dbReference type="ChEBI" id="CHEBI:15378"/>
        <dbReference type="ChEBI" id="CHEBI:30616"/>
        <dbReference type="ChEBI" id="CHEBI:43474"/>
        <dbReference type="ChEBI" id="CHEBI:456216"/>
    </reaction>
</comment>
<comment type="subcellular location">
    <subcellularLocation>
        <location>Cytoplasm</location>
        <location>Cytoskeleton</location>
    </subcellularLocation>
</comment>
<comment type="similarity">
    <text evidence="2">Belongs to the actin family.</text>
</comment>
<accession>P78711</accession>
<accession>Q7S7R0</accession>
<accession>V5IPI2</accession>